<protein>
    <recommendedName>
        <fullName evidence="1">Large ribosomal subunit protein uL4</fullName>
    </recommendedName>
    <alternativeName>
        <fullName evidence="3">50S ribosomal protein L4</fullName>
    </alternativeName>
</protein>
<gene>
    <name evidence="1" type="primary">rplD</name>
    <name type="ordered locus">SCO4703</name>
    <name type="ORF">SCD31.28</name>
</gene>
<dbReference type="EMBL" id="AL939121">
    <property type="protein sequence ID" value="CAB82071.1"/>
    <property type="molecule type" value="Genomic_DNA"/>
</dbReference>
<dbReference type="RefSeq" id="NP_628862.1">
    <property type="nucleotide sequence ID" value="NC_003888.3"/>
</dbReference>
<dbReference type="RefSeq" id="WP_003974266.1">
    <property type="nucleotide sequence ID" value="NZ_VNID01000016.1"/>
</dbReference>
<dbReference type="SMR" id="Q9L0D9"/>
<dbReference type="FunCoup" id="Q9L0D9">
    <property type="interactions" value="387"/>
</dbReference>
<dbReference type="STRING" id="100226.gene:17762352"/>
<dbReference type="PaxDb" id="100226-SCO4703"/>
<dbReference type="GeneID" id="91384335"/>
<dbReference type="KEGG" id="sco:SCO4703"/>
<dbReference type="PATRIC" id="fig|100226.15.peg.4774"/>
<dbReference type="eggNOG" id="COG0088">
    <property type="taxonomic scope" value="Bacteria"/>
</dbReference>
<dbReference type="HOGENOM" id="CLU_041575_5_0_11"/>
<dbReference type="InParanoid" id="Q9L0D9"/>
<dbReference type="OrthoDB" id="9803201at2"/>
<dbReference type="PhylomeDB" id="Q9L0D9"/>
<dbReference type="Proteomes" id="UP000001973">
    <property type="component" value="Chromosome"/>
</dbReference>
<dbReference type="GO" id="GO:1990904">
    <property type="term" value="C:ribonucleoprotein complex"/>
    <property type="evidence" value="ECO:0007669"/>
    <property type="project" value="UniProtKB-KW"/>
</dbReference>
<dbReference type="GO" id="GO:0005840">
    <property type="term" value="C:ribosome"/>
    <property type="evidence" value="ECO:0007669"/>
    <property type="project" value="UniProtKB-KW"/>
</dbReference>
<dbReference type="GO" id="GO:0019843">
    <property type="term" value="F:rRNA binding"/>
    <property type="evidence" value="ECO:0007669"/>
    <property type="project" value="UniProtKB-UniRule"/>
</dbReference>
<dbReference type="GO" id="GO:0003735">
    <property type="term" value="F:structural constituent of ribosome"/>
    <property type="evidence" value="ECO:0000318"/>
    <property type="project" value="GO_Central"/>
</dbReference>
<dbReference type="GO" id="GO:0006412">
    <property type="term" value="P:translation"/>
    <property type="evidence" value="ECO:0007669"/>
    <property type="project" value="UniProtKB-UniRule"/>
</dbReference>
<dbReference type="FunFam" id="3.40.1370.10:FF:000004">
    <property type="entry name" value="50S ribosomal protein L4"/>
    <property type="match status" value="1"/>
</dbReference>
<dbReference type="Gene3D" id="3.40.1370.10">
    <property type="match status" value="1"/>
</dbReference>
<dbReference type="HAMAP" id="MF_01328_B">
    <property type="entry name" value="Ribosomal_uL4_B"/>
    <property type="match status" value="1"/>
</dbReference>
<dbReference type="InterPro" id="IPR002136">
    <property type="entry name" value="Ribosomal_uL4"/>
</dbReference>
<dbReference type="InterPro" id="IPR013005">
    <property type="entry name" value="Ribosomal_uL4-like"/>
</dbReference>
<dbReference type="InterPro" id="IPR023574">
    <property type="entry name" value="Ribosomal_uL4_dom_sf"/>
</dbReference>
<dbReference type="NCBIfam" id="TIGR03953">
    <property type="entry name" value="rplD_bact"/>
    <property type="match status" value="1"/>
</dbReference>
<dbReference type="PANTHER" id="PTHR10746">
    <property type="entry name" value="50S RIBOSOMAL PROTEIN L4"/>
    <property type="match status" value="1"/>
</dbReference>
<dbReference type="PANTHER" id="PTHR10746:SF6">
    <property type="entry name" value="LARGE RIBOSOMAL SUBUNIT PROTEIN UL4M"/>
    <property type="match status" value="1"/>
</dbReference>
<dbReference type="Pfam" id="PF00573">
    <property type="entry name" value="Ribosomal_L4"/>
    <property type="match status" value="1"/>
</dbReference>
<dbReference type="SUPFAM" id="SSF52166">
    <property type="entry name" value="Ribosomal protein L4"/>
    <property type="match status" value="1"/>
</dbReference>
<feature type="chain" id="PRO_0000129287" description="Large ribosomal subunit protein uL4">
    <location>
        <begin position="1"/>
        <end position="219"/>
    </location>
</feature>
<feature type="region of interest" description="Disordered" evidence="2">
    <location>
        <begin position="43"/>
        <end position="101"/>
    </location>
</feature>
<feature type="compositionally biased region" description="Basic residues" evidence="2">
    <location>
        <begin position="61"/>
        <end position="72"/>
    </location>
</feature>
<reference key="1">
    <citation type="journal article" date="2002" name="Nature">
        <title>Complete genome sequence of the model actinomycete Streptomyces coelicolor A3(2).</title>
        <authorList>
            <person name="Bentley S.D."/>
            <person name="Chater K.F."/>
            <person name="Cerdeno-Tarraga A.-M."/>
            <person name="Challis G.L."/>
            <person name="Thomson N.R."/>
            <person name="James K.D."/>
            <person name="Harris D.E."/>
            <person name="Quail M.A."/>
            <person name="Kieser H."/>
            <person name="Harper D."/>
            <person name="Bateman A."/>
            <person name="Brown S."/>
            <person name="Chandra G."/>
            <person name="Chen C.W."/>
            <person name="Collins M."/>
            <person name="Cronin A."/>
            <person name="Fraser A."/>
            <person name="Goble A."/>
            <person name="Hidalgo J."/>
            <person name="Hornsby T."/>
            <person name="Howarth S."/>
            <person name="Huang C.-H."/>
            <person name="Kieser T."/>
            <person name="Larke L."/>
            <person name="Murphy L.D."/>
            <person name="Oliver K."/>
            <person name="O'Neil S."/>
            <person name="Rabbinowitsch E."/>
            <person name="Rajandream M.A."/>
            <person name="Rutherford K.M."/>
            <person name="Rutter S."/>
            <person name="Seeger K."/>
            <person name="Saunders D."/>
            <person name="Sharp S."/>
            <person name="Squares R."/>
            <person name="Squares S."/>
            <person name="Taylor K."/>
            <person name="Warren T."/>
            <person name="Wietzorrek A."/>
            <person name="Woodward J.R."/>
            <person name="Barrell B.G."/>
            <person name="Parkhill J."/>
            <person name="Hopwood D.A."/>
        </authorList>
    </citation>
    <scope>NUCLEOTIDE SEQUENCE [LARGE SCALE GENOMIC DNA]</scope>
    <source>
        <strain>ATCC BAA-471 / A3(2) / M145</strain>
    </source>
</reference>
<proteinExistence type="inferred from homology"/>
<accession>Q9L0D9</accession>
<sequence>MSTVDILSPAGEKTGSVELPAEIFGVEKISIPLIHQVVVAQNAAARQGTHKTKRRGEVRGGGKKPYRQKGTGRARQGSTRAPQFAGGGVVHGPQPRDYSQRTPKKMKAAALRHALTDRARHNRIHVVTGVIEGENPSTKAARTLFGKISERKNLLLVVDRADEAAWLSARNLPQIHILEPGQLNTYDVLVSDDVVFTQAAFESFVSGPNKAVDTEGSEA</sequence>
<evidence type="ECO:0000255" key="1">
    <source>
        <dbReference type="HAMAP-Rule" id="MF_01328"/>
    </source>
</evidence>
<evidence type="ECO:0000256" key="2">
    <source>
        <dbReference type="SAM" id="MobiDB-lite"/>
    </source>
</evidence>
<evidence type="ECO:0000305" key="3"/>
<name>RL4_STRCO</name>
<comment type="function">
    <text evidence="1">One of the primary rRNA binding proteins, this protein initially binds near the 5'-end of the 23S rRNA. It is important during the early stages of 50S assembly. It makes multiple contacts with different domains of the 23S rRNA in the assembled 50S subunit and ribosome.</text>
</comment>
<comment type="function">
    <text evidence="1">Forms part of the polypeptide exit tunnel.</text>
</comment>
<comment type="subunit">
    <text evidence="1">Part of the 50S ribosomal subunit.</text>
</comment>
<comment type="similarity">
    <text evidence="1">Belongs to the universal ribosomal protein uL4 family.</text>
</comment>
<keyword id="KW-1185">Reference proteome</keyword>
<keyword id="KW-0687">Ribonucleoprotein</keyword>
<keyword id="KW-0689">Ribosomal protein</keyword>
<keyword id="KW-0694">RNA-binding</keyword>
<keyword id="KW-0699">rRNA-binding</keyword>
<organism>
    <name type="scientific">Streptomyces coelicolor (strain ATCC BAA-471 / A3(2) / M145)</name>
    <dbReference type="NCBI Taxonomy" id="100226"/>
    <lineage>
        <taxon>Bacteria</taxon>
        <taxon>Bacillati</taxon>
        <taxon>Actinomycetota</taxon>
        <taxon>Actinomycetes</taxon>
        <taxon>Kitasatosporales</taxon>
        <taxon>Streptomycetaceae</taxon>
        <taxon>Streptomyces</taxon>
        <taxon>Streptomyces albidoflavus group</taxon>
    </lineage>
</organism>